<proteinExistence type="inferred from homology"/>
<keyword id="KW-0028">Amino-acid biosynthesis</keyword>
<keyword id="KW-0100">Branched-chain amino acid biosynthesis</keyword>
<keyword id="KW-0460">Magnesium</keyword>
<keyword id="KW-0479">Metal-binding</keyword>
<keyword id="KW-0521">NADP</keyword>
<keyword id="KW-0560">Oxidoreductase</keyword>
<keyword id="KW-1185">Reference proteome</keyword>
<evidence type="ECO:0000255" key="1">
    <source>
        <dbReference type="HAMAP-Rule" id="MF_00435"/>
    </source>
</evidence>
<evidence type="ECO:0000255" key="2">
    <source>
        <dbReference type="PROSITE-ProRule" id="PRU01197"/>
    </source>
</evidence>
<evidence type="ECO:0000255" key="3">
    <source>
        <dbReference type="PROSITE-ProRule" id="PRU01198"/>
    </source>
</evidence>
<evidence type="ECO:0000305" key="4"/>
<organism>
    <name type="scientific">Rhizobium meliloti (strain 1021)</name>
    <name type="common">Ensifer meliloti</name>
    <name type="synonym">Sinorhizobium meliloti</name>
    <dbReference type="NCBI Taxonomy" id="266834"/>
    <lineage>
        <taxon>Bacteria</taxon>
        <taxon>Pseudomonadati</taxon>
        <taxon>Pseudomonadota</taxon>
        <taxon>Alphaproteobacteria</taxon>
        <taxon>Hyphomicrobiales</taxon>
        <taxon>Rhizobiaceae</taxon>
        <taxon>Sinorhizobium/Ensifer group</taxon>
        <taxon>Sinorhizobium</taxon>
    </lineage>
</organism>
<name>ILVC_RHIME</name>
<sequence>MRVYYDRDADLNLIKSKKVAIIGYGSQGRAHALNLKDSGAQNVAIALKSGSATAKKAEADGFKVMTVAEAAAWADLMMMATPDELQADIYKADIAGNIRDGAAIAFAHGLNVHFGLIEPKASVDVVMIAPKGPGHTVRGEYQKGGGVPCLVAVHQDASGNALDLALSYACGVGGGRSGIIETNFKEECETDLFGEQVVLCGGLVELIRAGFETLVEAGYAPEMAYFECLHEVKLIVDLIYEGGIANMNYSISNTAEWGEYVTGPRIITEDTKAEMKRVLKDIQTGKFTSEWMQEYRSGAARFKGIRRVNDSHQIEEVGAKLRAMMPWIGKNKLVDKAKN</sequence>
<comment type="function">
    <text evidence="1">Involved in the biosynthesis of branched-chain amino acids (BCAA). Catalyzes an alkyl-migration followed by a ketol-acid reduction of (S)-2-acetolactate (S2AL) to yield (R)-2,3-dihydroxy-isovalerate. In the isomerase reaction, S2AL is rearranged via a Mg-dependent methyl migration to produce 3-hydroxy-3-methyl-2-ketobutyrate (HMKB). In the reductase reaction, this 2-ketoacid undergoes a metal-dependent reduction by NADPH to yield (R)-2,3-dihydroxy-isovalerate.</text>
</comment>
<comment type="catalytic activity">
    <reaction evidence="1">
        <text>(2R)-2,3-dihydroxy-3-methylbutanoate + NADP(+) = (2S)-2-acetolactate + NADPH + H(+)</text>
        <dbReference type="Rhea" id="RHEA:22068"/>
        <dbReference type="ChEBI" id="CHEBI:15378"/>
        <dbReference type="ChEBI" id="CHEBI:49072"/>
        <dbReference type="ChEBI" id="CHEBI:57783"/>
        <dbReference type="ChEBI" id="CHEBI:58349"/>
        <dbReference type="ChEBI" id="CHEBI:58476"/>
        <dbReference type="EC" id="1.1.1.86"/>
    </reaction>
</comment>
<comment type="catalytic activity">
    <reaction evidence="1">
        <text>(2R,3R)-2,3-dihydroxy-3-methylpentanoate + NADP(+) = (S)-2-ethyl-2-hydroxy-3-oxobutanoate + NADPH + H(+)</text>
        <dbReference type="Rhea" id="RHEA:13493"/>
        <dbReference type="ChEBI" id="CHEBI:15378"/>
        <dbReference type="ChEBI" id="CHEBI:49256"/>
        <dbReference type="ChEBI" id="CHEBI:49258"/>
        <dbReference type="ChEBI" id="CHEBI:57783"/>
        <dbReference type="ChEBI" id="CHEBI:58349"/>
        <dbReference type="EC" id="1.1.1.86"/>
    </reaction>
</comment>
<comment type="cofactor">
    <cofactor evidence="1">
        <name>Mg(2+)</name>
        <dbReference type="ChEBI" id="CHEBI:18420"/>
    </cofactor>
    <text evidence="1">Binds 2 magnesium ions per subunit.</text>
</comment>
<comment type="pathway">
    <text evidence="1">Amino-acid biosynthesis; L-isoleucine biosynthesis; L-isoleucine from 2-oxobutanoate: step 2/4.</text>
</comment>
<comment type="pathway">
    <text evidence="1">Amino-acid biosynthesis; L-valine biosynthesis; L-valine from pyruvate: step 2/4.</text>
</comment>
<comment type="similarity">
    <text evidence="1">Belongs to the ketol-acid reductoisomerase family.</text>
</comment>
<dbReference type="EC" id="1.1.1.86" evidence="1"/>
<dbReference type="EMBL" id="M74076">
    <property type="protein sequence ID" value="AAA26293.1"/>
    <property type="molecule type" value="Genomic_DNA"/>
</dbReference>
<dbReference type="EMBL" id="AL591688">
    <property type="protein sequence ID" value="CAC46647.1"/>
    <property type="molecule type" value="Genomic_DNA"/>
</dbReference>
<dbReference type="RefSeq" id="NP_386174.1">
    <property type="nucleotide sequence ID" value="NC_003047.1"/>
</dbReference>
<dbReference type="RefSeq" id="WP_003537021.1">
    <property type="nucleotide sequence ID" value="NC_003047.1"/>
</dbReference>
<dbReference type="SMR" id="Q52955"/>
<dbReference type="EnsemblBacteria" id="CAC46647">
    <property type="protein sequence ID" value="CAC46647"/>
    <property type="gene ID" value="SMc04346"/>
</dbReference>
<dbReference type="KEGG" id="sme:SMc04346"/>
<dbReference type="PATRIC" id="fig|266834.11.peg.3523"/>
<dbReference type="eggNOG" id="COG0059">
    <property type="taxonomic scope" value="Bacteria"/>
</dbReference>
<dbReference type="HOGENOM" id="CLU_033821_0_1_5"/>
<dbReference type="OrthoDB" id="9804088at2"/>
<dbReference type="UniPathway" id="UPA00047">
    <property type="reaction ID" value="UER00056"/>
</dbReference>
<dbReference type="UniPathway" id="UPA00049">
    <property type="reaction ID" value="UER00060"/>
</dbReference>
<dbReference type="Proteomes" id="UP000001976">
    <property type="component" value="Chromosome"/>
</dbReference>
<dbReference type="GO" id="GO:0005829">
    <property type="term" value="C:cytosol"/>
    <property type="evidence" value="ECO:0007669"/>
    <property type="project" value="TreeGrafter"/>
</dbReference>
<dbReference type="GO" id="GO:0004455">
    <property type="term" value="F:ketol-acid reductoisomerase activity"/>
    <property type="evidence" value="ECO:0007669"/>
    <property type="project" value="UniProtKB-UniRule"/>
</dbReference>
<dbReference type="GO" id="GO:0000287">
    <property type="term" value="F:magnesium ion binding"/>
    <property type="evidence" value="ECO:0007669"/>
    <property type="project" value="UniProtKB-UniRule"/>
</dbReference>
<dbReference type="GO" id="GO:0050661">
    <property type="term" value="F:NADP binding"/>
    <property type="evidence" value="ECO:0007669"/>
    <property type="project" value="InterPro"/>
</dbReference>
<dbReference type="GO" id="GO:0009097">
    <property type="term" value="P:isoleucine biosynthetic process"/>
    <property type="evidence" value="ECO:0007669"/>
    <property type="project" value="UniProtKB-UniRule"/>
</dbReference>
<dbReference type="GO" id="GO:0009099">
    <property type="term" value="P:L-valine biosynthetic process"/>
    <property type="evidence" value="ECO:0007669"/>
    <property type="project" value="UniProtKB-UniRule"/>
</dbReference>
<dbReference type="FunFam" id="3.40.50.720:FF:000023">
    <property type="entry name" value="Ketol-acid reductoisomerase (NADP(+))"/>
    <property type="match status" value="1"/>
</dbReference>
<dbReference type="Gene3D" id="6.10.240.10">
    <property type="match status" value="1"/>
</dbReference>
<dbReference type="Gene3D" id="3.40.50.720">
    <property type="entry name" value="NAD(P)-binding Rossmann-like Domain"/>
    <property type="match status" value="1"/>
</dbReference>
<dbReference type="HAMAP" id="MF_00435">
    <property type="entry name" value="IlvC"/>
    <property type="match status" value="1"/>
</dbReference>
<dbReference type="InterPro" id="IPR008927">
    <property type="entry name" value="6-PGluconate_DH-like_C_sf"/>
</dbReference>
<dbReference type="InterPro" id="IPR013023">
    <property type="entry name" value="KARI"/>
</dbReference>
<dbReference type="InterPro" id="IPR000506">
    <property type="entry name" value="KARI_C"/>
</dbReference>
<dbReference type="InterPro" id="IPR013116">
    <property type="entry name" value="KARI_N"/>
</dbReference>
<dbReference type="InterPro" id="IPR014359">
    <property type="entry name" value="KARI_prok"/>
</dbReference>
<dbReference type="InterPro" id="IPR036291">
    <property type="entry name" value="NAD(P)-bd_dom_sf"/>
</dbReference>
<dbReference type="NCBIfam" id="TIGR00465">
    <property type="entry name" value="ilvC"/>
    <property type="match status" value="1"/>
</dbReference>
<dbReference type="NCBIfam" id="NF004017">
    <property type="entry name" value="PRK05479.1"/>
    <property type="match status" value="1"/>
</dbReference>
<dbReference type="NCBIfam" id="NF009940">
    <property type="entry name" value="PRK13403.1"/>
    <property type="match status" value="1"/>
</dbReference>
<dbReference type="PANTHER" id="PTHR21371">
    <property type="entry name" value="KETOL-ACID REDUCTOISOMERASE, MITOCHONDRIAL"/>
    <property type="match status" value="1"/>
</dbReference>
<dbReference type="PANTHER" id="PTHR21371:SF1">
    <property type="entry name" value="KETOL-ACID REDUCTOISOMERASE, MITOCHONDRIAL"/>
    <property type="match status" value="1"/>
</dbReference>
<dbReference type="Pfam" id="PF01450">
    <property type="entry name" value="KARI_C"/>
    <property type="match status" value="1"/>
</dbReference>
<dbReference type="Pfam" id="PF07991">
    <property type="entry name" value="KARI_N"/>
    <property type="match status" value="1"/>
</dbReference>
<dbReference type="PIRSF" id="PIRSF000116">
    <property type="entry name" value="IlvC_gammaproteo"/>
    <property type="match status" value="1"/>
</dbReference>
<dbReference type="SUPFAM" id="SSF48179">
    <property type="entry name" value="6-phosphogluconate dehydrogenase C-terminal domain-like"/>
    <property type="match status" value="1"/>
</dbReference>
<dbReference type="SUPFAM" id="SSF51735">
    <property type="entry name" value="NAD(P)-binding Rossmann-fold domains"/>
    <property type="match status" value="1"/>
</dbReference>
<dbReference type="PROSITE" id="PS51851">
    <property type="entry name" value="KARI_C"/>
    <property type="match status" value="1"/>
</dbReference>
<dbReference type="PROSITE" id="PS51850">
    <property type="entry name" value="KARI_N"/>
    <property type="match status" value="1"/>
</dbReference>
<gene>
    <name evidence="1" type="primary">ilvC</name>
    <name type="ordered locus">R02068</name>
    <name type="ORF">SMc04346</name>
</gene>
<reference key="1">
    <citation type="journal article" date="1991" name="J. Bacteriol.">
        <title>The product of the Rhizobium meliloti ilvC gene is required for isoleucine and valine synthesis and nodulation of alfalfa.</title>
        <authorList>
            <person name="Aguilar O.M."/>
            <person name="Grasso D.H."/>
        </authorList>
    </citation>
    <scope>NUCLEOTIDE SEQUENCE [GENOMIC DNA]</scope>
    <source>
        <strain>1021</strain>
    </source>
</reference>
<reference key="2">
    <citation type="journal article" date="2001" name="Proc. Natl. Acad. Sci. U.S.A.">
        <title>Analysis of the chromosome sequence of the legume symbiont Sinorhizobium meliloti strain 1021.</title>
        <authorList>
            <person name="Capela D."/>
            <person name="Barloy-Hubler F."/>
            <person name="Gouzy J."/>
            <person name="Bothe G."/>
            <person name="Ampe F."/>
            <person name="Batut J."/>
            <person name="Boistard P."/>
            <person name="Becker A."/>
            <person name="Boutry M."/>
            <person name="Cadieu E."/>
            <person name="Dreano S."/>
            <person name="Gloux S."/>
            <person name="Godrie T."/>
            <person name="Goffeau A."/>
            <person name="Kahn D."/>
            <person name="Kiss E."/>
            <person name="Lelaure V."/>
            <person name="Masuy D."/>
            <person name="Pohl T."/>
            <person name="Portetelle D."/>
            <person name="Puehler A."/>
            <person name="Purnelle B."/>
            <person name="Ramsperger U."/>
            <person name="Renard C."/>
            <person name="Thebault P."/>
            <person name="Vandenbol M."/>
            <person name="Weidner S."/>
            <person name="Galibert F."/>
        </authorList>
    </citation>
    <scope>NUCLEOTIDE SEQUENCE [LARGE SCALE GENOMIC DNA]</scope>
    <source>
        <strain>1021</strain>
    </source>
</reference>
<reference key="3">
    <citation type="journal article" date="2001" name="Science">
        <title>The composite genome of the legume symbiont Sinorhizobium meliloti.</title>
        <authorList>
            <person name="Galibert F."/>
            <person name="Finan T.M."/>
            <person name="Long S.R."/>
            <person name="Puehler A."/>
            <person name="Abola P."/>
            <person name="Ampe F."/>
            <person name="Barloy-Hubler F."/>
            <person name="Barnett M.J."/>
            <person name="Becker A."/>
            <person name="Boistard P."/>
            <person name="Bothe G."/>
            <person name="Boutry M."/>
            <person name="Bowser L."/>
            <person name="Buhrmester J."/>
            <person name="Cadieu E."/>
            <person name="Capela D."/>
            <person name="Chain P."/>
            <person name="Cowie A."/>
            <person name="Davis R.W."/>
            <person name="Dreano S."/>
            <person name="Federspiel N.A."/>
            <person name="Fisher R.F."/>
            <person name="Gloux S."/>
            <person name="Godrie T."/>
            <person name="Goffeau A."/>
            <person name="Golding B."/>
            <person name="Gouzy J."/>
            <person name="Gurjal M."/>
            <person name="Hernandez-Lucas I."/>
            <person name="Hong A."/>
            <person name="Huizar L."/>
            <person name="Hyman R.W."/>
            <person name="Jones T."/>
            <person name="Kahn D."/>
            <person name="Kahn M.L."/>
            <person name="Kalman S."/>
            <person name="Keating D.H."/>
            <person name="Kiss E."/>
            <person name="Komp C."/>
            <person name="Lelaure V."/>
            <person name="Masuy D."/>
            <person name="Palm C."/>
            <person name="Peck M.C."/>
            <person name="Pohl T.M."/>
            <person name="Portetelle D."/>
            <person name="Purnelle B."/>
            <person name="Ramsperger U."/>
            <person name="Surzycki R."/>
            <person name="Thebault P."/>
            <person name="Vandenbol M."/>
            <person name="Vorhoelter F.J."/>
            <person name="Weidner S."/>
            <person name="Wells D.H."/>
            <person name="Wong K."/>
            <person name="Yeh K.-C."/>
            <person name="Batut J."/>
        </authorList>
    </citation>
    <scope>NUCLEOTIDE SEQUENCE [LARGE SCALE GENOMIC DNA]</scope>
    <source>
        <strain>1021</strain>
    </source>
</reference>
<accession>Q52955</accession>
<protein>
    <recommendedName>
        <fullName evidence="1">Ketol-acid reductoisomerase (NADP(+))</fullName>
        <shortName evidence="1">KARI</shortName>
        <ecNumber evidence="1">1.1.1.86</ecNumber>
    </recommendedName>
    <alternativeName>
        <fullName evidence="1">Acetohydroxy-acid isomeroreductase</fullName>
        <shortName evidence="1">AHIR</shortName>
    </alternativeName>
    <alternativeName>
        <fullName evidence="1">Alpha-keto-beta-hydroxylacyl reductoisomerase</fullName>
    </alternativeName>
    <alternativeName>
        <fullName evidence="1">Ketol-acid reductoisomerase type 1</fullName>
    </alternativeName>
    <alternativeName>
        <fullName evidence="1">Ketol-acid reductoisomerase type I</fullName>
    </alternativeName>
</protein>
<feature type="chain" id="PRO_0000151347" description="Ketol-acid reductoisomerase (NADP(+))">
    <location>
        <begin position="1"/>
        <end position="339"/>
    </location>
</feature>
<feature type="domain" description="KARI N-terminal Rossmann" evidence="2">
    <location>
        <begin position="1"/>
        <end position="182"/>
    </location>
</feature>
<feature type="domain" description="KARI C-terminal knotted" evidence="3">
    <location>
        <begin position="183"/>
        <end position="328"/>
    </location>
</feature>
<feature type="active site" evidence="1">
    <location>
        <position position="108"/>
    </location>
</feature>
<feature type="binding site" evidence="1">
    <location>
        <begin position="24"/>
        <end position="27"/>
    </location>
    <ligand>
        <name>NADP(+)</name>
        <dbReference type="ChEBI" id="CHEBI:58349"/>
    </ligand>
</feature>
<feature type="binding site" evidence="1">
    <location>
        <position position="48"/>
    </location>
    <ligand>
        <name>NADP(+)</name>
        <dbReference type="ChEBI" id="CHEBI:58349"/>
    </ligand>
</feature>
<feature type="binding site" evidence="1">
    <location>
        <position position="51"/>
    </location>
    <ligand>
        <name>NADP(+)</name>
        <dbReference type="ChEBI" id="CHEBI:58349"/>
    </ligand>
</feature>
<feature type="binding site" evidence="1">
    <location>
        <position position="53"/>
    </location>
    <ligand>
        <name>NADP(+)</name>
        <dbReference type="ChEBI" id="CHEBI:58349"/>
    </ligand>
</feature>
<feature type="binding site" evidence="1">
    <location>
        <begin position="83"/>
        <end position="86"/>
    </location>
    <ligand>
        <name>NADP(+)</name>
        <dbReference type="ChEBI" id="CHEBI:58349"/>
    </ligand>
</feature>
<feature type="binding site" evidence="1">
    <location>
        <position position="134"/>
    </location>
    <ligand>
        <name>NADP(+)</name>
        <dbReference type="ChEBI" id="CHEBI:58349"/>
    </ligand>
</feature>
<feature type="binding site" evidence="1">
    <location>
        <position position="191"/>
    </location>
    <ligand>
        <name>Mg(2+)</name>
        <dbReference type="ChEBI" id="CHEBI:18420"/>
        <label>1</label>
    </ligand>
</feature>
<feature type="binding site" evidence="1">
    <location>
        <position position="191"/>
    </location>
    <ligand>
        <name>Mg(2+)</name>
        <dbReference type="ChEBI" id="CHEBI:18420"/>
        <label>2</label>
    </ligand>
</feature>
<feature type="binding site" evidence="1">
    <location>
        <position position="195"/>
    </location>
    <ligand>
        <name>Mg(2+)</name>
        <dbReference type="ChEBI" id="CHEBI:18420"/>
        <label>1</label>
    </ligand>
</feature>
<feature type="binding site" evidence="1">
    <location>
        <position position="227"/>
    </location>
    <ligand>
        <name>Mg(2+)</name>
        <dbReference type="ChEBI" id="CHEBI:18420"/>
        <label>2</label>
    </ligand>
</feature>
<feature type="binding site" evidence="1">
    <location>
        <position position="231"/>
    </location>
    <ligand>
        <name>Mg(2+)</name>
        <dbReference type="ChEBI" id="CHEBI:18420"/>
        <label>2</label>
    </ligand>
</feature>
<feature type="binding site" evidence="1">
    <location>
        <position position="252"/>
    </location>
    <ligand>
        <name>substrate</name>
    </ligand>
</feature>
<feature type="sequence conflict" description="In Ref. 1; AAA26293." evidence="4" ref="1">
    <original>GR</original>
    <variation>A</variation>
    <location>
        <begin position="28"/>
        <end position="29"/>
    </location>
</feature>
<feature type="sequence conflict" description="In Ref. 1; AAA26293." evidence="4" ref="1">
    <original>DELQADIYKADIAGNIRDGAAIAFAHGLNVHFGLIEPKASVDVVMIAPK</original>
    <variation>TSCRPTSTRPTSPETSATARQSPLRTASTSTSASSSRRLGRRRNDRSE</variation>
    <location>
        <begin position="83"/>
        <end position="131"/>
    </location>
</feature>